<gene>
    <name evidence="1" type="primary">atpG</name>
    <name type="ordered locus">Mflv_2317</name>
</gene>
<feature type="chain" id="PRO_1000083795" description="ATP synthase gamma chain">
    <location>
        <begin position="1"/>
        <end position="309"/>
    </location>
</feature>
<reference key="1">
    <citation type="submission" date="2007-04" db="EMBL/GenBank/DDBJ databases">
        <title>Complete sequence of chromosome of Mycobacterium gilvum PYR-GCK.</title>
        <authorList>
            <consortium name="US DOE Joint Genome Institute"/>
            <person name="Copeland A."/>
            <person name="Lucas S."/>
            <person name="Lapidus A."/>
            <person name="Barry K."/>
            <person name="Detter J.C."/>
            <person name="Glavina del Rio T."/>
            <person name="Hammon N."/>
            <person name="Israni S."/>
            <person name="Dalin E."/>
            <person name="Tice H."/>
            <person name="Pitluck S."/>
            <person name="Chain P."/>
            <person name="Malfatti S."/>
            <person name="Shin M."/>
            <person name="Vergez L."/>
            <person name="Schmutz J."/>
            <person name="Larimer F."/>
            <person name="Land M."/>
            <person name="Hauser L."/>
            <person name="Kyrpides N."/>
            <person name="Mikhailova N."/>
            <person name="Miller C."/>
            <person name="Richardson P."/>
        </authorList>
    </citation>
    <scope>NUCLEOTIDE SEQUENCE [LARGE SCALE GENOMIC DNA]</scope>
    <source>
        <strain>PYR-GCK</strain>
    </source>
</reference>
<dbReference type="EMBL" id="CP000656">
    <property type="protein sequence ID" value="ABP44795.1"/>
    <property type="molecule type" value="Genomic_DNA"/>
</dbReference>
<dbReference type="SMR" id="A4T8K1"/>
<dbReference type="STRING" id="350054.Mflv_2317"/>
<dbReference type="KEGG" id="mgi:Mflv_2317"/>
<dbReference type="eggNOG" id="COG0224">
    <property type="taxonomic scope" value="Bacteria"/>
</dbReference>
<dbReference type="HOGENOM" id="CLU_050669_0_0_11"/>
<dbReference type="OrthoDB" id="9812769at2"/>
<dbReference type="GO" id="GO:0005886">
    <property type="term" value="C:plasma membrane"/>
    <property type="evidence" value="ECO:0007669"/>
    <property type="project" value="UniProtKB-SubCell"/>
</dbReference>
<dbReference type="GO" id="GO:0045259">
    <property type="term" value="C:proton-transporting ATP synthase complex"/>
    <property type="evidence" value="ECO:0007669"/>
    <property type="project" value="UniProtKB-KW"/>
</dbReference>
<dbReference type="GO" id="GO:0005524">
    <property type="term" value="F:ATP binding"/>
    <property type="evidence" value="ECO:0007669"/>
    <property type="project" value="UniProtKB-UniRule"/>
</dbReference>
<dbReference type="GO" id="GO:0046933">
    <property type="term" value="F:proton-transporting ATP synthase activity, rotational mechanism"/>
    <property type="evidence" value="ECO:0007669"/>
    <property type="project" value="UniProtKB-UniRule"/>
</dbReference>
<dbReference type="GO" id="GO:0042777">
    <property type="term" value="P:proton motive force-driven plasma membrane ATP synthesis"/>
    <property type="evidence" value="ECO:0007669"/>
    <property type="project" value="UniProtKB-UniRule"/>
</dbReference>
<dbReference type="CDD" id="cd12151">
    <property type="entry name" value="F1-ATPase_gamma"/>
    <property type="match status" value="1"/>
</dbReference>
<dbReference type="Gene3D" id="3.40.1380.10">
    <property type="match status" value="1"/>
</dbReference>
<dbReference type="Gene3D" id="1.10.287.80">
    <property type="entry name" value="ATP synthase, gamma subunit, helix hairpin domain"/>
    <property type="match status" value="1"/>
</dbReference>
<dbReference type="HAMAP" id="MF_00815">
    <property type="entry name" value="ATP_synth_gamma_bact"/>
    <property type="match status" value="1"/>
</dbReference>
<dbReference type="InterPro" id="IPR035968">
    <property type="entry name" value="ATP_synth_F1_ATPase_gsu"/>
</dbReference>
<dbReference type="InterPro" id="IPR000131">
    <property type="entry name" value="ATP_synth_F1_gsu"/>
</dbReference>
<dbReference type="InterPro" id="IPR023632">
    <property type="entry name" value="ATP_synth_F1_gsu_CS"/>
</dbReference>
<dbReference type="NCBIfam" id="TIGR01146">
    <property type="entry name" value="ATPsyn_F1gamma"/>
    <property type="match status" value="1"/>
</dbReference>
<dbReference type="NCBIfam" id="NF004145">
    <property type="entry name" value="PRK05621.1-2"/>
    <property type="match status" value="1"/>
</dbReference>
<dbReference type="PANTHER" id="PTHR11693">
    <property type="entry name" value="ATP SYNTHASE GAMMA CHAIN"/>
    <property type="match status" value="1"/>
</dbReference>
<dbReference type="PANTHER" id="PTHR11693:SF22">
    <property type="entry name" value="ATP SYNTHASE SUBUNIT GAMMA, MITOCHONDRIAL"/>
    <property type="match status" value="1"/>
</dbReference>
<dbReference type="Pfam" id="PF00231">
    <property type="entry name" value="ATP-synt"/>
    <property type="match status" value="1"/>
</dbReference>
<dbReference type="PRINTS" id="PR00126">
    <property type="entry name" value="ATPASEGAMMA"/>
</dbReference>
<dbReference type="SUPFAM" id="SSF52943">
    <property type="entry name" value="ATP synthase (F1-ATPase), gamma subunit"/>
    <property type="match status" value="1"/>
</dbReference>
<dbReference type="PROSITE" id="PS00153">
    <property type="entry name" value="ATPASE_GAMMA"/>
    <property type="match status" value="1"/>
</dbReference>
<comment type="function">
    <text evidence="1">Produces ATP from ADP in the presence of a proton gradient across the membrane. The gamma chain is believed to be important in regulating ATPase activity and the flow of protons through the CF(0) complex.</text>
</comment>
<comment type="subunit">
    <text evidence="1">F-type ATPases have 2 components, CF(1) - the catalytic core - and CF(0) - the membrane proton channel. CF(1) has five subunits: alpha(3), beta(3), gamma(1), delta(1), epsilon(1). CF(0) has three main subunits: a, b and c.</text>
</comment>
<comment type="subcellular location">
    <subcellularLocation>
        <location evidence="1">Cell membrane</location>
        <topology evidence="1">Peripheral membrane protein</topology>
    </subcellularLocation>
</comment>
<comment type="similarity">
    <text evidence="1">Belongs to the ATPase gamma chain family.</text>
</comment>
<name>ATPG_MYCGI</name>
<protein>
    <recommendedName>
        <fullName evidence="1">ATP synthase gamma chain</fullName>
    </recommendedName>
    <alternativeName>
        <fullName evidence="1">ATP synthase F1 sector gamma subunit</fullName>
    </alternativeName>
    <alternativeName>
        <fullName evidence="1">F-ATPase gamma subunit</fullName>
    </alternativeName>
</protein>
<accession>A4T8K1</accession>
<sequence>MAATLRELRGRIRSAGSIKKITKAQELIATSRIAKAQARVEAARPYSTEITSMLTELASASALDHPLLVARENPRRAAVLVVSSDRGLCGAYNANVLRQSEELFALLREEGKEPVVYTVGRKAQGYFNFRQREVTESWSGFSERPTYENAKEIADTLVASFMSGADDEGDDAGADGVLGVDELHIVFTEFRSMLSQSAAARRIAPMVVEYVGDEQPEDGPQTLFSFEPDPETLFDALLPRYVATRVYAALLEAAASESASRRRAMKSATDNADDLIKALKLSANRERQAQITQEISEIVGGANALADSR</sequence>
<proteinExistence type="inferred from homology"/>
<keyword id="KW-0066">ATP synthesis</keyword>
<keyword id="KW-1003">Cell membrane</keyword>
<keyword id="KW-0139">CF(1)</keyword>
<keyword id="KW-0375">Hydrogen ion transport</keyword>
<keyword id="KW-0406">Ion transport</keyword>
<keyword id="KW-0472">Membrane</keyword>
<keyword id="KW-0813">Transport</keyword>
<organism>
    <name type="scientific">Mycolicibacterium gilvum (strain PYR-GCK)</name>
    <name type="common">Mycobacterium gilvum (strain PYR-GCK)</name>
    <dbReference type="NCBI Taxonomy" id="350054"/>
    <lineage>
        <taxon>Bacteria</taxon>
        <taxon>Bacillati</taxon>
        <taxon>Actinomycetota</taxon>
        <taxon>Actinomycetes</taxon>
        <taxon>Mycobacteriales</taxon>
        <taxon>Mycobacteriaceae</taxon>
        <taxon>Mycolicibacterium</taxon>
    </lineage>
</organism>
<evidence type="ECO:0000255" key="1">
    <source>
        <dbReference type="HAMAP-Rule" id="MF_00815"/>
    </source>
</evidence>